<reference key="1">
    <citation type="journal article" date="1995" name="Cytokine">
        <title>The rat interleukin 4 receptor: coevolution of ligand and receptor.</title>
        <authorList>
            <person name="Richter G."/>
            <person name="Hein G."/>
            <person name="Blankenstein T."/>
            <person name="Diamantstein T."/>
        </authorList>
    </citation>
    <scope>NUCLEOTIDE SEQUENCE [MRNA] (ISOFORM 1)</scope>
    <source>
        <strain>Wistar</strain>
        <tissue>Spleen</tissue>
    </source>
</reference>
<reference key="2">
    <citation type="journal article" date="1999" name="Biochim. Biophys. Acta">
        <title>Identification of soluble interleukin-4 receptor in rat glomerular epithelial cells.</title>
        <authorList>
            <person name="Chen G."/>
            <person name="Nagasawa R."/>
            <person name="Imasawa T."/>
            <person name="Eto Y."/>
            <person name="Kikuchi K."/>
            <person name="Maruyama N."/>
        </authorList>
    </citation>
    <scope>NUCLEOTIDE SEQUENCE [MRNA] (ISOFORMS 1 AND 2)</scope>
    <source>
        <tissue>Kidney</tissue>
    </source>
</reference>
<keyword id="KW-0025">Alternative splicing</keyword>
<keyword id="KW-1003">Cell membrane</keyword>
<keyword id="KW-1015">Disulfide bond</keyword>
<keyword id="KW-0325">Glycoprotein</keyword>
<keyword id="KW-0472">Membrane</keyword>
<keyword id="KW-0597">Phosphoprotein</keyword>
<keyword id="KW-0675">Receptor</keyword>
<keyword id="KW-1185">Reference proteome</keyword>
<keyword id="KW-0964">Secreted</keyword>
<keyword id="KW-0732">Signal</keyword>
<keyword id="KW-0812">Transmembrane</keyword>
<keyword id="KW-1133">Transmembrane helix</keyword>
<comment type="function">
    <text evidence="1">Receptor for both interleukin 4 and interleukin 13. Couples to the JAK1/2/3-STAT6 pathway. The IL4 response is involved in promoting Th2 differentiation. The IL4/IL13 responses are involved in regulating IgE production and, chemokine and mucus production at sites of allergic inflammation. In certain cell types, can signal through activation of insulin receptor substrates, IRS1/IRS2 (By similarity).</text>
</comment>
<comment type="function">
    <text>Isoform 2 (soluble form) inhibits IL4-induced spleen cell proliferation.</text>
</comment>
<comment type="subunit">
    <text evidence="2 3">The functional IL4 receptor is formed by initial binding of IL4 to IL4R. Subsequent recruitment to the complex of the common gamma chain, in immune cells, creates a type I receptor and, in non-immune cells, of IL13RA1 forms a type II receptor. IL4R can also interact with the IL13/IL13RA1 complex to form a similar type II receptor. Interacts with PIK3C3. Interacts with the SH2-containing phosphatases, PTPN6/SHIP1, PTPN11/SHIP2 and INPP5D/SHIP. Interacts with JAK1 through a Box 1-containing region; inhibited by SOCS5. Interacts with SOCS5; inhibits IL4 signaling. Interacts with JAK3. Interacts with CLM1. Interacts with IL13RA2.</text>
</comment>
<comment type="subcellular location">
    <subcellularLocation>
        <location>Cell membrane</location>
        <topology>Single-pass type I membrane protein</topology>
    </subcellularLocation>
</comment>
<comment type="subcellular location">
    <molecule>Isoform 2</molecule>
    <subcellularLocation>
        <location evidence="8">Secreted</location>
    </subcellularLocation>
</comment>
<comment type="alternative products">
    <event type="alternative splicing"/>
    <isoform>
        <id>Q63257-1</id>
        <name>1</name>
        <name>Membrane-bound form</name>
        <name>mIL4R</name>
        <sequence type="displayed"/>
    </isoform>
    <isoform>
        <id>Q63257-2</id>
        <name>2</name>
        <name>Soluble form</name>
        <name>sIL4R</name>
        <sequence type="described" ref="VSP_011118 VSP_011119"/>
    </isoform>
</comment>
<comment type="tissue specificity">
    <text>Isoform 2 is expressed in kidney, spleen, lung and liver.</text>
</comment>
<comment type="domain">
    <text>The WSXWS motif appears to be necessary for proper protein folding and thereby efficient intracellular transport and cell-surface receptor binding.</text>
</comment>
<comment type="domain">
    <text>The box 1 motif is required for JAK interaction and/or activation.</text>
</comment>
<comment type="domain">
    <text>Contains 1 copy of a cytoplasmic motif that is referred to as the immunoreceptor tyrosine-based inhibitor motif (ITIM). This motif is involved in modulation of cellular responses. The phosphorylated ITIM motif can bind the SH2 domain of several SH2-containing phosphatases.</text>
</comment>
<comment type="PTM">
    <text evidence="1">On IL4 binding, phosphorylated on C-terminal tyrosine residues.</text>
</comment>
<comment type="similarity">
    <text evidence="8">Belongs to the type I cytokine receptor family. Type 4 subfamily.</text>
</comment>
<proteinExistence type="evidence at transcript level"/>
<evidence type="ECO:0000250" key="1"/>
<evidence type="ECO:0000250" key="2">
    <source>
        <dbReference type="UniProtKB" id="P16382"/>
    </source>
</evidence>
<evidence type="ECO:0000250" key="3">
    <source>
        <dbReference type="UniProtKB" id="P24394"/>
    </source>
</evidence>
<evidence type="ECO:0000255" key="4"/>
<evidence type="ECO:0000255" key="5">
    <source>
        <dbReference type="PROSITE-ProRule" id="PRU00316"/>
    </source>
</evidence>
<evidence type="ECO:0000256" key="6">
    <source>
        <dbReference type="SAM" id="MobiDB-lite"/>
    </source>
</evidence>
<evidence type="ECO:0000303" key="7">
    <source>
    </source>
</evidence>
<evidence type="ECO:0000305" key="8"/>
<gene>
    <name type="primary">Il4r</name>
    <name type="synonym">Il4ra</name>
</gene>
<dbReference type="EMBL" id="X69903">
    <property type="protein sequence ID" value="CAA49528.1"/>
    <property type="molecule type" value="mRNA"/>
</dbReference>
<dbReference type="EMBL" id="AB015746">
    <property type="protein sequence ID" value="BAA78337.1"/>
    <property type="molecule type" value="mRNA"/>
</dbReference>
<dbReference type="EMBL" id="AB015747">
    <property type="protein sequence ID" value="BAA78338.1"/>
    <property type="molecule type" value="mRNA"/>
</dbReference>
<dbReference type="PIR" id="S31575">
    <property type="entry name" value="S31575"/>
</dbReference>
<dbReference type="RefSeq" id="NP_596871.2">
    <molecule id="Q63257-1"/>
    <property type="nucleotide sequence ID" value="NM_133380.2"/>
</dbReference>
<dbReference type="RefSeq" id="XP_006230277.1">
    <molecule id="Q63257-1"/>
    <property type="nucleotide sequence ID" value="XM_006230215.5"/>
</dbReference>
<dbReference type="RefSeq" id="XP_006230278.1">
    <molecule id="Q63257-1"/>
    <property type="nucleotide sequence ID" value="XM_006230216.4"/>
</dbReference>
<dbReference type="RefSeq" id="XP_008758085.1">
    <property type="nucleotide sequence ID" value="XM_008759863.2"/>
</dbReference>
<dbReference type="RefSeq" id="XP_008758086.1">
    <property type="nucleotide sequence ID" value="XM_008759864.2"/>
</dbReference>
<dbReference type="RefSeq" id="XP_017444292.1">
    <property type="nucleotide sequence ID" value="XM_017588803.1"/>
</dbReference>
<dbReference type="RefSeq" id="XP_017444293.1">
    <molecule id="Q63257-1"/>
    <property type="nucleotide sequence ID" value="XM_017588804.3"/>
</dbReference>
<dbReference type="SMR" id="Q63257"/>
<dbReference type="FunCoup" id="Q63257">
    <property type="interactions" value="196"/>
</dbReference>
<dbReference type="STRING" id="10116.ENSRNOP00000020994"/>
<dbReference type="GlyCosmos" id="Q63257">
    <property type="glycosylation" value="5 sites, No reported glycans"/>
</dbReference>
<dbReference type="GlyGen" id="Q63257">
    <property type="glycosylation" value="7 sites"/>
</dbReference>
<dbReference type="iPTMnet" id="Q63257"/>
<dbReference type="PhosphoSitePlus" id="Q63257"/>
<dbReference type="jPOST" id="Q63257"/>
<dbReference type="PaxDb" id="10116-ENSRNOP00000020994"/>
<dbReference type="Ensembl" id="ENSRNOT00000020994.6">
    <molecule id="Q63257-1"/>
    <property type="protein sequence ID" value="ENSRNOP00000020994.2"/>
    <property type="gene ID" value="ENSRNOG00000015441.8"/>
</dbReference>
<dbReference type="GeneID" id="25084"/>
<dbReference type="KEGG" id="rno:25084"/>
<dbReference type="UCSC" id="RGD:2899">
    <molecule id="Q63257-1"/>
    <property type="organism name" value="rat"/>
</dbReference>
<dbReference type="AGR" id="RGD:2899"/>
<dbReference type="CTD" id="3566"/>
<dbReference type="RGD" id="2899">
    <property type="gene designation" value="Il4r"/>
</dbReference>
<dbReference type="eggNOG" id="ENOG502S3Y8">
    <property type="taxonomic scope" value="Eukaryota"/>
</dbReference>
<dbReference type="GeneTree" id="ENSGT00510000049182"/>
<dbReference type="HOGENOM" id="CLU_020561_0_0_1"/>
<dbReference type="InParanoid" id="Q63257"/>
<dbReference type="OrthoDB" id="67208at9989"/>
<dbReference type="PhylomeDB" id="Q63257"/>
<dbReference type="TreeFam" id="TF337996"/>
<dbReference type="Reactome" id="R-RNO-6785807">
    <property type="pathway name" value="Interleukin-4 and Interleukin-13 signaling"/>
</dbReference>
<dbReference type="PRO" id="PR:Q63257"/>
<dbReference type="Proteomes" id="UP000002494">
    <property type="component" value="Chromosome 1"/>
</dbReference>
<dbReference type="Bgee" id="ENSRNOG00000015441">
    <property type="expression patterns" value="Expressed in ileum and 18 other cell types or tissues"/>
</dbReference>
<dbReference type="GO" id="GO:0009897">
    <property type="term" value="C:external side of plasma membrane"/>
    <property type="evidence" value="ECO:0000318"/>
    <property type="project" value="GO_Central"/>
</dbReference>
<dbReference type="GO" id="GO:0005615">
    <property type="term" value="C:extracellular space"/>
    <property type="evidence" value="ECO:0000314"/>
    <property type="project" value="RGD"/>
</dbReference>
<dbReference type="GO" id="GO:0005886">
    <property type="term" value="C:plasma membrane"/>
    <property type="evidence" value="ECO:0000266"/>
    <property type="project" value="RGD"/>
</dbReference>
<dbReference type="GO" id="GO:0043235">
    <property type="term" value="C:receptor complex"/>
    <property type="evidence" value="ECO:0000266"/>
    <property type="project" value="RGD"/>
</dbReference>
<dbReference type="GO" id="GO:0004896">
    <property type="term" value="F:cytokine receptor activity"/>
    <property type="evidence" value="ECO:0000318"/>
    <property type="project" value="GO_Central"/>
</dbReference>
<dbReference type="GO" id="GO:0004913">
    <property type="term" value="F:interleukin-4 receptor activity"/>
    <property type="evidence" value="ECO:0000266"/>
    <property type="project" value="RGD"/>
</dbReference>
<dbReference type="GO" id="GO:0044877">
    <property type="term" value="F:protein-containing complex binding"/>
    <property type="evidence" value="ECO:0000304"/>
    <property type="project" value="RGD"/>
</dbReference>
<dbReference type="GO" id="GO:0019221">
    <property type="term" value="P:cytokine-mediated signaling pathway"/>
    <property type="evidence" value="ECO:0000318"/>
    <property type="project" value="GO_Central"/>
</dbReference>
<dbReference type="GO" id="GO:0042832">
    <property type="term" value="P:defense response to protozoan"/>
    <property type="evidence" value="ECO:0000266"/>
    <property type="project" value="RGD"/>
</dbReference>
<dbReference type="GO" id="GO:0006955">
    <property type="term" value="P:immune response"/>
    <property type="evidence" value="ECO:0000304"/>
    <property type="project" value="RGD"/>
</dbReference>
<dbReference type="GO" id="GO:0016064">
    <property type="term" value="P:immunoglobulin mediated immune response"/>
    <property type="evidence" value="ECO:0000266"/>
    <property type="project" value="RGD"/>
</dbReference>
<dbReference type="GO" id="GO:0035771">
    <property type="term" value="P:interleukin-4-mediated signaling pathway"/>
    <property type="evidence" value="ECO:0000266"/>
    <property type="project" value="RGD"/>
</dbReference>
<dbReference type="GO" id="GO:0045626">
    <property type="term" value="P:negative regulation of T-helper 1 cell differentiation"/>
    <property type="evidence" value="ECO:0000266"/>
    <property type="project" value="RGD"/>
</dbReference>
<dbReference type="GO" id="GO:0032722">
    <property type="term" value="P:positive regulation of chemokine production"/>
    <property type="evidence" value="ECO:0000266"/>
    <property type="project" value="RGD"/>
</dbReference>
<dbReference type="GO" id="GO:0120162">
    <property type="term" value="P:positive regulation of cold-induced thermogenesis"/>
    <property type="evidence" value="ECO:0000250"/>
    <property type="project" value="YuBioLab"/>
</dbReference>
<dbReference type="GO" id="GO:0002639">
    <property type="term" value="P:positive regulation of immunoglobulin production"/>
    <property type="evidence" value="ECO:0000266"/>
    <property type="project" value="RGD"/>
</dbReference>
<dbReference type="GO" id="GO:0043032">
    <property type="term" value="P:positive regulation of macrophage activation"/>
    <property type="evidence" value="ECO:0000266"/>
    <property type="project" value="RGD"/>
</dbReference>
<dbReference type="GO" id="GO:0043306">
    <property type="term" value="P:positive regulation of mast cell degranulation"/>
    <property type="evidence" value="ECO:0000266"/>
    <property type="project" value="RGD"/>
</dbReference>
<dbReference type="GO" id="GO:1901741">
    <property type="term" value="P:positive regulation of myoblast fusion"/>
    <property type="evidence" value="ECO:0000266"/>
    <property type="project" value="RGD"/>
</dbReference>
<dbReference type="GO" id="GO:0045630">
    <property type="term" value="P:positive regulation of T-helper 2 cell differentiation"/>
    <property type="evidence" value="ECO:0000266"/>
    <property type="project" value="RGD"/>
</dbReference>
<dbReference type="GO" id="GO:0002532">
    <property type="term" value="P:production of molecular mediator involved in inflammatory response"/>
    <property type="evidence" value="ECO:0007669"/>
    <property type="project" value="InterPro"/>
</dbReference>
<dbReference type="GO" id="GO:0042127">
    <property type="term" value="P:regulation of cell population proliferation"/>
    <property type="evidence" value="ECO:0000314"/>
    <property type="project" value="RGD"/>
</dbReference>
<dbReference type="GO" id="GO:0043627">
    <property type="term" value="P:response to estrogen"/>
    <property type="evidence" value="ECO:0000270"/>
    <property type="project" value="RGD"/>
</dbReference>
<dbReference type="GO" id="GO:1990834">
    <property type="term" value="P:response to odorant"/>
    <property type="evidence" value="ECO:0000270"/>
    <property type="project" value="RGD"/>
</dbReference>
<dbReference type="GO" id="GO:0045063">
    <property type="term" value="P:T-helper 1 cell differentiation"/>
    <property type="evidence" value="ECO:0000266"/>
    <property type="project" value="RGD"/>
</dbReference>
<dbReference type="GO" id="GO:0045064">
    <property type="term" value="P:T-helper 2 cell differentiation"/>
    <property type="evidence" value="ECO:0000266"/>
    <property type="project" value="RGD"/>
</dbReference>
<dbReference type="CDD" id="cd00063">
    <property type="entry name" value="FN3"/>
    <property type="match status" value="1"/>
</dbReference>
<dbReference type="Gene3D" id="2.60.40.10">
    <property type="entry name" value="Immunoglobulins"/>
    <property type="match status" value="2"/>
</dbReference>
<dbReference type="InterPro" id="IPR003961">
    <property type="entry name" value="FN3_dom"/>
</dbReference>
<dbReference type="InterPro" id="IPR036116">
    <property type="entry name" value="FN3_sf"/>
</dbReference>
<dbReference type="InterPro" id="IPR003531">
    <property type="entry name" value="Hempt_rcpt_S_F1_CS"/>
</dbReference>
<dbReference type="InterPro" id="IPR013783">
    <property type="entry name" value="Ig-like_fold"/>
</dbReference>
<dbReference type="InterPro" id="IPR015319">
    <property type="entry name" value="IL-4_rcpt-alpha_N"/>
</dbReference>
<dbReference type="PANTHER" id="PTHR23037">
    <property type="entry name" value="CYTOKINE RECEPTOR"/>
    <property type="match status" value="1"/>
</dbReference>
<dbReference type="PANTHER" id="PTHR23037:SF32">
    <property type="entry name" value="INTERLEUKIN-4 RECEPTOR SUBUNIT ALPHA"/>
    <property type="match status" value="1"/>
</dbReference>
<dbReference type="Pfam" id="PF09238">
    <property type="entry name" value="IL4Ra_N"/>
    <property type="match status" value="1"/>
</dbReference>
<dbReference type="SUPFAM" id="SSF49265">
    <property type="entry name" value="Fibronectin type III"/>
    <property type="match status" value="2"/>
</dbReference>
<dbReference type="PROSITE" id="PS50853">
    <property type="entry name" value="FN3"/>
    <property type="match status" value="1"/>
</dbReference>
<dbReference type="PROSITE" id="PS01355">
    <property type="entry name" value="HEMATOPO_REC_S_F1"/>
    <property type="match status" value="1"/>
</dbReference>
<protein>
    <recommendedName>
        <fullName>Interleukin-4 receptor subunit alpha</fullName>
        <shortName>IL-4 receptor subunit alpha</shortName>
        <shortName>IL-4R subunit alpha</shortName>
        <shortName>IL-4R-alpha</shortName>
        <shortName>IL-4RA</shortName>
    </recommendedName>
    <cdAntigenName>CD124</cdAntigenName>
</protein>
<sequence length="801" mass="86719">MGWLCTKFLSSVSCLILLWVTGSGGIKVLGDPTCFSDYIRTSTCEWQLDSTVDCSSQLLLDYRLLFEFSENLTCTPKNSADTVCVCQMAIEEPIQADTYWLELWSERGQLWQGSFKPSDNVKPPAPDNLTLHTNVSNALLLMWSNPYPSNNFLHKGLICMVNISREDNPAEFKVYNVTYTEPKLSFPVNTLTSGVRYRARVRVLSQSFPGIWSEWSPSITWYNHFQLPLLQRLPLGVSISCICILLFCLTCYFSIIKIKKIWWDQIPTPARSPLAAIIIQDTKVSLWEKQTRSQESTKSRHWKTCLTKLLPCLLEHRVKKERESPKAAKTKPLQSPEKAGWYPAEVSRTVLWPENVHVSVVRCMELFEAPVQNVEEEEDEMVKGDLSMSPENSGGGFQESQADIMARLTENLFSDLLGAENGGVGQSSMAESSSLLPSESGQASTSWACFPTGPSETTCQVTGQQPPHPDPERATGTACTQVPLVISDNPAYRSFSDFSSPAPNPGELASEQKQAGHLEEGDLLSPVDPHSSGPPMQQAESWEQILHMSVLQHGTAGSTPAPTSGYQEFVQAVKQGASQDAGVPGVGPSGDTGYKAFSSLLSSSGVCTDTAAAGTDSGCGGYKPFQNPVPNQSPNSMPLFTFGLDMELPPSPLNSAPPNSTPECLGLELGLKGGTWLKAPPPSEQVPKPFGDDLGLGIVYSSLTCHLCGHLKQHHSQEEDGQIHVVASPGCGCCYDEKSPSLGNLSGTLESCPGEMSQEANLTLAPRTPSNLSGVGKGPGHSPVPSQTTEVPVGTLGVTVS</sequence>
<organism>
    <name type="scientific">Rattus norvegicus</name>
    <name type="common">Rat</name>
    <dbReference type="NCBI Taxonomy" id="10116"/>
    <lineage>
        <taxon>Eukaryota</taxon>
        <taxon>Metazoa</taxon>
        <taxon>Chordata</taxon>
        <taxon>Craniata</taxon>
        <taxon>Vertebrata</taxon>
        <taxon>Euteleostomi</taxon>
        <taxon>Mammalia</taxon>
        <taxon>Eutheria</taxon>
        <taxon>Euarchontoglires</taxon>
        <taxon>Glires</taxon>
        <taxon>Rodentia</taxon>
        <taxon>Myomorpha</taxon>
        <taxon>Muroidea</taxon>
        <taxon>Muridae</taxon>
        <taxon>Murinae</taxon>
        <taxon>Rattus</taxon>
    </lineage>
</organism>
<feature type="signal peptide" evidence="1">
    <location>
        <begin position="1"/>
        <end position="25"/>
    </location>
</feature>
<feature type="chain" id="PRO_0000010892" description="Interleukin-4 receptor subunit alpha">
    <location>
        <begin position="26"/>
        <end position="801"/>
    </location>
</feature>
<feature type="topological domain" description="Extracellular" evidence="4">
    <location>
        <begin position="26"/>
        <end position="232"/>
    </location>
</feature>
<feature type="transmembrane region" description="Helical" evidence="4">
    <location>
        <begin position="233"/>
        <end position="256"/>
    </location>
</feature>
<feature type="topological domain" description="Cytoplasmic" evidence="4">
    <location>
        <begin position="257"/>
        <end position="801"/>
    </location>
</feature>
<feature type="domain" description="Fibronectin type-III" evidence="5">
    <location>
        <begin position="125"/>
        <end position="223"/>
    </location>
</feature>
<feature type="region of interest" description="Disordered" evidence="6">
    <location>
        <begin position="424"/>
        <end position="476"/>
    </location>
</feature>
<feature type="region of interest" description="Required for IRS1 activation and IL4-induced cell growth" evidence="1">
    <location>
        <begin position="439"/>
        <end position="549"/>
    </location>
</feature>
<feature type="region of interest" description="Disordered" evidence="6">
    <location>
        <begin position="493"/>
        <end position="515"/>
    </location>
</feature>
<feature type="region of interest" description="Required for IL4-induced gene expression" evidence="1">
    <location>
        <begin position="549"/>
        <end position="644"/>
    </location>
</feature>
<feature type="region of interest" description="Disordered" evidence="6">
    <location>
        <begin position="767"/>
        <end position="801"/>
    </location>
</feature>
<feature type="short sequence motif" description="WSXWS motif">
    <location>
        <begin position="212"/>
        <end position="216"/>
    </location>
</feature>
<feature type="short sequence motif" description="Box 1 motif">
    <location>
        <begin position="262"/>
        <end position="270"/>
    </location>
</feature>
<feature type="short sequence motif" description="ITIM motif">
    <location>
        <begin position="698"/>
        <end position="703"/>
    </location>
</feature>
<feature type="compositionally biased region" description="Low complexity" evidence="6">
    <location>
        <begin position="426"/>
        <end position="444"/>
    </location>
</feature>
<feature type="compositionally biased region" description="Polar residues" evidence="6">
    <location>
        <begin position="454"/>
        <end position="465"/>
    </location>
</feature>
<feature type="modified residue" description="Phosphoserine" evidence="2">
    <location>
        <position position="164"/>
    </location>
</feature>
<feature type="modified residue" description="Phosphotyrosine" evidence="3">
    <location>
        <position position="492"/>
    </location>
</feature>
<feature type="modified residue" description="Phosphotyrosine" evidence="3">
    <location>
        <position position="566"/>
    </location>
</feature>
<feature type="modified residue" description="Phosphotyrosine" evidence="3">
    <location>
        <position position="594"/>
    </location>
</feature>
<feature type="modified residue" description="Phosphotyrosine" evidence="3">
    <location>
        <position position="622"/>
    </location>
</feature>
<feature type="glycosylation site" description="N-linked (GlcNAc...) asparagine" evidence="4">
    <location>
        <position position="71"/>
    </location>
</feature>
<feature type="glycosylation site" description="N-linked (GlcNAc...) asparagine" evidence="4">
    <location>
        <position position="128"/>
    </location>
</feature>
<feature type="glycosylation site" description="N-linked (GlcNAc...) asparagine" evidence="4">
    <location>
        <position position="134"/>
    </location>
</feature>
<feature type="glycosylation site" description="N-linked (GlcNAc...) asparagine" evidence="4">
    <location>
        <position position="162"/>
    </location>
</feature>
<feature type="glycosylation site" description="N-linked (GlcNAc...) asparagine" evidence="4">
    <location>
        <position position="176"/>
    </location>
</feature>
<feature type="disulfide bond" evidence="1">
    <location>
        <begin position="34"/>
        <end position="44"/>
    </location>
</feature>
<feature type="disulfide bond" evidence="1">
    <location>
        <begin position="74"/>
        <end position="86"/>
    </location>
</feature>
<feature type="splice variant" id="VSP_011118" description="In isoform 2." evidence="7">
    <original>HFQLPL</original>
    <variation>PNNVNL</variation>
    <location>
        <begin position="224"/>
        <end position="229"/>
    </location>
</feature>
<feature type="splice variant" id="VSP_011119" description="In isoform 2." evidence="7">
    <location>
        <begin position="230"/>
        <end position="801"/>
    </location>
</feature>
<feature type="sequence conflict" description="In Ref. 1; CAA49528." evidence="8" ref="1">
    <original>W</original>
    <variation>R</variation>
    <location>
        <position position="3"/>
    </location>
</feature>
<feature type="sequence conflict" description="In Ref. 1; CAA49528." evidence="8" ref="1">
    <original>A</original>
    <variation>G</variation>
    <location>
        <position position="138"/>
    </location>
</feature>
<feature type="sequence conflict" description="In Ref. 1; CAA49528." evidence="8" ref="1">
    <original>S</original>
    <variation>L</variation>
    <location>
        <position position="285"/>
    </location>
</feature>
<feature type="sequence conflict" description="In Ref. 1; CAA49528." evidence="8" ref="1">
    <original>DAG</original>
    <variation>ARW</variation>
    <location>
        <begin position="580"/>
        <end position="582"/>
    </location>
</feature>
<feature type="sequence conflict" description="In Ref. 1; CAA49528." evidence="8" ref="1">
    <original>S</original>
    <variation>C</variation>
    <location>
        <position position="728"/>
    </location>
</feature>
<feature type="sequence conflict" description="In Ref. 1; CAA49528." evidence="8" ref="1">
    <original>GK</original>
    <variation>Q</variation>
    <location>
        <begin position="776"/>
        <end position="777"/>
    </location>
</feature>
<name>IL4RA_RAT</name>
<accession>Q63257</accession>
<accession>Q9R1W8</accession>
<accession>Q9WTM8</accession>